<organism>
    <name type="scientific">Yersinia pestis</name>
    <dbReference type="NCBI Taxonomy" id="632"/>
    <lineage>
        <taxon>Bacteria</taxon>
        <taxon>Pseudomonadati</taxon>
        <taxon>Pseudomonadota</taxon>
        <taxon>Gammaproteobacteria</taxon>
        <taxon>Enterobacterales</taxon>
        <taxon>Yersiniaceae</taxon>
        <taxon>Yersinia</taxon>
    </lineage>
</organism>
<keyword id="KW-0343">GTPase activation</keyword>
<keyword id="KW-1185">Reference proteome</keyword>
<keyword id="KW-0690">Ribosome biogenesis</keyword>
<proteinExistence type="inferred from homology"/>
<reference key="1">
    <citation type="journal article" date="2001" name="Nature">
        <title>Genome sequence of Yersinia pestis, the causative agent of plague.</title>
        <authorList>
            <person name="Parkhill J."/>
            <person name="Wren B.W."/>
            <person name="Thomson N.R."/>
            <person name="Titball R.W."/>
            <person name="Holden M.T.G."/>
            <person name="Prentice M.B."/>
            <person name="Sebaihia M."/>
            <person name="James K.D."/>
            <person name="Churcher C.M."/>
            <person name="Mungall K.L."/>
            <person name="Baker S."/>
            <person name="Basham D."/>
            <person name="Bentley S.D."/>
            <person name="Brooks K."/>
            <person name="Cerdeno-Tarraga A.-M."/>
            <person name="Chillingworth T."/>
            <person name="Cronin A."/>
            <person name="Davies R.M."/>
            <person name="Davis P."/>
            <person name="Dougan G."/>
            <person name="Feltwell T."/>
            <person name="Hamlin N."/>
            <person name="Holroyd S."/>
            <person name="Jagels K."/>
            <person name="Karlyshev A.V."/>
            <person name="Leather S."/>
            <person name="Moule S."/>
            <person name="Oyston P.C.F."/>
            <person name="Quail M.A."/>
            <person name="Rutherford K.M."/>
            <person name="Simmonds M."/>
            <person name="Skelton J."/>
            <person name="Stevens K."/>
            <person name="Whitehead S."/>
            <person name="Barrell B.G."/>
        </authorList>
    </citation>
    <scope>NUCLEOTIDE SEQUENCE [LARGE SCALE GENOMIC DNA]</scope>
    <source>
        <strain>CO-92 / Biovar Orientalis</strain>
    </source>
</reference>
<reference key="2">
    <citation type="journal article" date="2002" name="J. Bacteriol.">
        <title>Genome sequence of Yersinia pestis KIM.</title>
        <authorList>
            <person name="Deng W."/>
            <person name="Burland V."/>
            <person name="Plunkett G. III"/>
            <person name="Boutin A."/>
            <person name="Mayhew G.F."/>
            <person name="Liss P."/>
            <person name="Perna N.T."/>
            <person name="Rose D.J."/>
            <person name="Mau B."/>
            <person name="Zhou S."/>
            <person name="Schwartz D.C."/>
            <person name="Fetherston J.D."/>
            <person name="Lindler L.E."/>
            <person name="Brubaker R.R."/>
            <person name="Plano G.V."/>
            <person name="Straley S.C."/>
            <person name="McDonough K.A."/>
            <person name="Nilles M.L."/>
            <person name="Matson J.S."/>
            <person name="Blattner F.R."/>
            <person name="Perry R.D."/>
        </authorList>
    </citation>
    <scope>NUCLEOTIDE SEQUENCE [LARGE SCALE GENOMIC DNA]</scope>
    <source>
        <strain>KIM10+ / Biovar Mediaevalis</strain>
    </source>
</reference>
<reference key="3">
    <citation type="journal article" date="2004" name="DNA Res.">
        <title>Complete genome sequence of Yersinia pestis strain 91001, an isolate avirulent to humans.</title>
        <authorList>
            <person name="Song Y."/>
            <person name="Tong Z."/>
            <person name="Wang J."/>
            <person name="Wang L."/>
            <person name="Guo Z."/>
            <person name="Han Y."/>
            <person name="Zhang J."/>
            <person name="Pei D."/>
            <person name="Zhou D."/>
            <person name="Qin H."/>
            <person name="Pang X."/>
            <person name="Han Y."/>
            <person name="Zhai J."/>
            <person name="Li M."/>
            <person name="Cui B."/>
            <person name="Qi Z."/>
            <person name="Jin L."/>
            <person name="Dai R."/>
            <person name="Chen F."/>
            <person name="Li S."/>
            <person name="Ye C."/>
            <person name="Du Z."/>
            <person name="Lin W."/>
            <person name="Wang J."/>
            <person name="Yu J."/>
            <person name="Yang H."/>
            <person name="Wang J."/>
            <person name="Huang P."/>
            <person name="Yang R."/>
        </authorList>
    </citation>
    <scope>NUCLEOTIDE SEQUENCE [LARGE SCALE GENOMIC DNA]</scope>
    <source>
        <strain>91001 / Biovar Mediaevalis</strain>
    </source>
</reference>
<comment type="function">
    <text evidence="1">A GTPase-activating protein (GAP) that modifies Der/EngA GTPase function. May play a role in ribosome biogenesis.</text>
</comment>
<comment type="subunit">
    <text evidence="1">Interacts with Der.</text>
</comment>
<comment type="similarity">
    <text evidence="1">Belongs to the YihI family.</text>
</comment>
<protein>
    <recommendedName>
        <fullName evidence="1">Der GTPase-activating protein YihI</fullName>
    </recommendedName>
</protein>
<evidence type="ECO:0000255" key="1">
    <source>
        <dbReference type="HAMAP-Rule" id="MF_01058"/>
    </source>
</evidence>
<evidence type="ECO:0000256" key="2">
    <source>
        <dbReference type="SAM" id="MobiDB-lite"/>
    </source>
</evidence>
<feature type="chain" id="PRO_0000209599" description="Der GTPase-activating protein YihI">
    <location>
        <begin position="1"/>
        <end position="188"/>
    </location>
</feature>
<feature type="region of interest" description="Disordered" evidence="2">
    <location>
        <begin position="1"/>
        <end position="80"/>
    </location>
</feature>
<feature type="region of interest" description="Disordered" evidence="2">
    <location>
        <begin position="162"/>
        <end position="188"/>
    </location>
</feature>
<feature type="compositionally biased region" description="Basic and acidic residues" evidence="2">
    <location>
        <begin position="27"/>
        <end position="37"/>
    </location>
</feature>
<feature type="compositionally biased region" description="Polar residues" evidence="2">
    <location>
        <begin position="47"/>
        <end position="57"/>
    </location>
</feature>
<accession>Q8ZJR9</accession>
<accession>Q0WKS2</accession>
<sequence>MKQPNKAPRANIAAPKGTATPKRRRKTRDELDAEARDRKRQKKHSGNRSGARTNVEGSNKKGHSQTQEKDPRVGSKVPVPLVIESQVKAKSMPKPVEKNVVKPRLTPEEELAKLENDERLDALLDRLDNDEVLNKEDQAYVDLTLDRIDALMEQLGIELGDDEDDVEREEKQEDILQLLKRGNPKDTF</sequence>
<dbReference type="EMBL" id="AL590842">
    <property type="protein sequence ID" value="CAL18710.1"/>
    <property type="molecule type" value="Genomic_DNA"/>
</dbReference>
<dbReference type="EMBL" id="AE009952">
    <property type="protein sequence ID" value="AAM87353.1"/>
    <property type="molecule type" value="Genomic_DNA"/>
</dbReference>
<dbReference type="EMBL" id="AE017042">
    <property type="protein sequence ID" value="AAS60302.1"/>
    <property type="molecule type" value="Genomic_DNA"/>
</dbReference>
<dbReference type="PIR" id="AE0003">
    <property type="entry name" value="AE0003"/>
</dbReference>
<dbReference type="RefSeq" id="WP_002213158.1">
    <property type="nucleotide sequence ID" value="NZ_WUCM01000104.1"/>
</dbReference>
<dbReference type="RefSeq" id="YP_002345116.1">
    <property type="nucleotide sequence ID" value="NC_003143.1"/>
</dbReference>
<dbReference type="SMR" id="Q8ZJR9"/>
<dbReference type="STRING" id="214092.YPO0020"/>
<dbReference type="PaxDb" id="214092-YPO0020"/>
<dbReference type="DNASU" id="1148755"/>
<dbReference type="EnsemblBacteria" id="AAS60302">
    <property type="protein sequence ID" value="AAS60302"/>
    <property type="gene ID" value="YP_0021"/>
</dbReference>
<dbReference type="GeneID" id="57974569"/>
<dbReference type="KEGG" id="ype:YPO0020"/>
<dbReference type="KEGG" id="ypk:y3808"/>
<dbReference type="KEGG" id="ypm:YP_0021"/>
<dbReference type="PATRIC" id="fig|214092.21.peg.241"/>
<dbReference type="eggNOG" id="COG3078">
    <property type="taxonomic scope" value="Bacteria"/>
</dbReference>
<dbReference type="HOGENOM" id="CLU_094104_2_0_6"/>
<dbReference type="OMA" id="ENNECLN"/>
<dbReference type="OrthoDB" id="5677577at2"/>
<dbReference type="Proteomes" id="UP000000815">
    <property type="component" value="Chromosome"/>
</dbReference>
<dbReference type="Proteomes" id="UP000001019">
    <property type="component" value="Chromosome"/>
</dbReference>
<dbReference type="Proteomes" id="UP000002490">
    <property type="component" value="Chromosome"/>
</dbReference>
<dbReference type="GO" id="GO:0005096">
    <property type="term" value="F:GTPase activator activity"/>
    <property type="evidence" value="ECO:0007669"/>
    <property type="project" value="UniProtKB-KW"/>
</dbReference>
<dbReference type="GO" id="GO:0042254">
    <property type="term" value="P:ribosome biogenesis"/>
    <property type="evidence" value="ECO:0007669"/>
    <property type="project" value="UniProtKB-KW"/>
</dbReference>
<dbReference type="HAMAP" id="MF_01058">
    <property type="entry name" value="GAP_YihI"/>
    <property type="match status" value="1"/>
</dbReference>
<dbReference type="InterPro" id="IPR007336">
    <property type="entry name" value="YihI"/>
</dbReference>
<dbReference type="NCBIfam" id="NF003560">
    <property type="entry name" value="PRK05244.1-1"/>
    <property type="match status" value="1"/>
</dbReference>
<dbReference type="Pfam" id="PF04220">
    <property type="entry name" value="YihI"/>
    <property type="match status" value="1"/>
</dbReference>
<name>YIHI_YERPE</name>
<gene>
    <name evidence="1" type="primary">yihI</name>
    <name type="ordered locus">YPO0020</name>
    <name type="ordered locus">y3808</name>
    <name type="ordered locus">YP_0021</name>
</gene>